<comment type="function">
    <text evidence="4">Constitutive trypsin that is expressed 2 days after emergence, coinciding with host seeking behavior of the female.</text>
</comment>
<comment type="catalytic activity">
    <reaction>
        <text>Preferential cleavage: Arg-|-Xaa, Lys-|-Xaa.</text>
        <dbReference type="EC" id="3.4.21.4"/>
    </reaction>
</comment>
<comment type="subcellular location">
    <subcellularLocation>
        <location evidence="4">Secreted</location>
    </subcellularLocation>
</comment>
<comment type="tissue specificity">
    <text evidence="4">Expressed in the midgut. Expression levels drop a few hours after blood feeding and pick up again 28 hours later.</text>
</comment>
<comment type="similarity">
    <text evidence="3">Belongs to the peptidase S1 family.</text>
</comment>
<comment type="sequence caution" evidence="5">
    <conflict type="erroneous gene model prediction">
        <sequence resource="EMBL-CDS" id="EAA12261"/>
    </conflict>
</comment>
<reference key="1">
    <citation type="journal article" date="1995" name="Exp. Parasitol.">
        <title>Constitutive and blood meal-induced trypsin genes in Anopheles gambiae.</title>
        <authorList>
            <person name="Mueller H.-M."/>
            <person name="Catteruccia F."/>
            <person name="Vizioli J."/>
            <person name="della Torre A."/>
            <person name="Crisanti A."/>
        </authorList>
    </citation>
    <scope>NUCLEOTIDE SEQUENCE [GENOMIC DNA]</scope>
    <scope>FUNCTION</scope>
    <scope>SUBCELLULAR LOCATION</scope>
    <scope>TISSUE SPECIFICITY</scope>
    <source>
        <strain>Suakoko</strain>
        <tissue>Midgut</tissue>
    </source>
</reference>
<reference key="2">
    <citation type="journal article" date="2002" name="Science">
        <title>The genome sequence of the malaria mosquito Anopheles gambiae.</title>
        <authorList>
            <person name="Holt R.A."/>
            <person name="Subramanian G.M."/>
            <person name="Halpern A."/>
            <person name="Sutton G.G."/>
            <person name="Charlab R."/>
            <person name="Nusskern D.R."/>
            <person name="Wincker P."/>
            <person name="Clark A.G."/>
            <person name="Ribeiro J.M.C."/>
            <person name="Wides R."/>
            <person name="Salzberg S.L."/>
            <person name="Loftus B.J."/>
            <person name="Yandell M.D."/>
            <person name="Majoros W.H."/>
            <person name="Rusch D.B."/>
            <person name="Lai Z."/>
            <person name="Kraft C.L."/>
            <person name="Abril J.F."/>
            <person name="Anthouard V."/>
            <person name="Arensburger P."/>
            <person name="Atkinson P.W."/>
            <person name="Baden H."/>
            <person name="de Berardinis V."/>
            <person name="Baldwin D."/>
            <person name="Benes V."/>
            <person name="Biedler J."/>
            <person name="Blass C."/>
            <person name="Bolanos R."/>
            <person name="Boscus D."/>
            <person name="Barnstead M."/>
            <person name="Cai S."/>
            <person name="Center A."/>
            <person name="Chaturverdi K."/>
            <person name="Christophides G.K."/>
            <person name="Chrystal M.A.M."/>
            <person name="Clamp M."/>
            <person name="Cravchik A."/>
            <person name="Curwen V."/>
            <person name="Dana A."/>
            <person name="Delcher A."/>
            <person name="Dew I."/>
            <person name="Evans C.A."/>
            <person name="Flanigan M."/>
            <person name="Grundschober-Freimoser A."/>
            <person name="Friedli L."/>
            <person name="Gu Z."/>
            <person name="Guan P."/>
            <person name="Guigo R."/>
            <person name="Hillenmeyer M.E."/>
            <person name="Hladun S.L."/>
            <person name="Hogan J.R."/>
            <person name="Hong Y.S."/>
            <person name="Hoover J."/>
            <person name="Jaillon O."/>
            <person name="Ke Z."/>
            <person name="Kodira C.D."/>
            <person name="Kokoza E."/>
            <person name="Koutsos A."/>
            <person name="Letunic I."/>
            <person name="Levitsky A.A."/>
            <person name="Liang Y."/>
            <person name="Lin J.-J."/>
            <person name="Lobo N.F."/>
            <person name="Lopez J.R."/>
            <person name="Malek J.A."/>
            <person name="McIntosh T.C."/>
            <person name="Meister S."/>
            <person name="Miller J.R."/>
            <person name="Mobarry C."/>
            <person name="Mongin E."/>
            <person name="Murphy S.D."/>
            <person name="O'Brochta D.A."/>
            <person name="Pfannkoch C."/>
            <person name="Qi R."/>
            <person name="Regier M.A."/>
            <person name="Remington K."/>
            <person name="Shao H."/>
            <person name="Sharakhova M.V."/>
            <person name="Sitter C.D."/>
            <person name="Shetty J."/>
            <person name="Smith T.J."/>
            <person name="Strong R."/>
            <person name="Sun J."/>
            <person name="Thomasova D."/>
            <person name="Ton L.Q."/>
            <person name="Topalis P."/>
            <person name="Tu Z.J."/>
            <person name="Unger M.F."/>
            <person name="Walenz B."/>
            <person name="Wang A.H."/>
            <person name="Wang J."/>
            <person name="Wang M."/>
            <person name="Wang X."/>
            <person name="Woodford K.J."/>
            <person name="Wortman J.R."/>
            <person name="Wu M."/>
            <person name="Yao A."/>
            <person name="Zdobnov E.M."/>
            <person name="Zhang H."/>
            <person name="Zhao Q."/>
            <person name="Zhao S."/>
            <person name="Zhu S.C."/>
            <person name="Zhimulev I."/>
            <person name="Coluzzi M."/>
            <person name="della Torre A."/>
            <person name="Roth C.W."/>
            <person name="Louis C."/>
            <person name="Kalush F."/>
            <person name="Mural R.J."/>
            <person name="Myers E.W."/>
            <person name="Adams M.D."/>
            <person name="Smith H.O."/>
            <person name="Broder S."/>
            <person name="Gardner M.J."/>
            <person name="Fraser C.M."/>
            <person name="Birney E."/>
            <person name="Bork P."/>
            <person name="Brey P.T."/>
            <person name="Venter J.C."/>
            <person name="Weissenbach J."/>
            <person name="Kafatos F.C."/>
            <person name="Collins F.H."/>
            <person name="Hoffman S.L."/>
        </authorList>
    </citation>
    <scope>NUCLEOTIDE SEQUENCE [LARGE SCALE GENOMIC DNA]</scope>
    <source>
        <strain>PEST</strain>
    </source>
</reference>
<sequence>MISNKIAILLAVLVVAVACAQARVALKHRSVQALPRFLPRPKYDVGHRIVGGFEIDVSETPYQVSLQYFNSHRCGGSVLNSKWILTAAHCTVNLQPSSLAVRLGSSRHASGGTVVRVARVLEHPNYDDSTIDYDFSLMELESELTFSDVVQPVSLPDQDEAVEDGTMTIVSGWGNTQSAAESNAILRAANVPTVNQKECTIAYSSSGGITDRMLCAGYKRGGKDACQGDSGGPLVVDGKLVGVVSWGFGCAMPGYPGVYARVAVVRDWVRENSGA</sequence>
<proteinExistence type="evidence at transcript level"/>
<feature type="signal peptide" evidence="2">
    <location>
        <begin position="1"/>
        <end position="22"/>
    </location>
</feature>
<feature type="propeptide" id="PRO_0000028247" description="Activation peptide">
    <location>
        <begin position="23"/>
        <end position="48"/>
    </location>
</feature>
<feature type="chain" id="PRO_0000028248" description="Trypsin-3">
    <location>
        <begin position="49"/>
        <end position="275"/>
    </location>
</feature>
<feature type="domain" description="Peptidase S1" evidence="3">
    <location>
        <begin position="49"/>
        <end position="274"/>
    </location>
</feature>
<feature type="active site" description="Charge relay system" evidence="1">
    <location>
        <position position="89"/>
    </location>
</feature>
<feature type="active site" description="Charge relay system" evidence="1">
    <location>
        <position position="134"/>
    </location>
</feature>
<feature type="active site" description="Charge relay system" evidence="1">
    <location>
        <position position="230"/>
    </location>
</feature>
<feature type="site" description="Required for specificity" evidence="1">
    <location>
        <position position="224"/>
    </location>
</feature>
<feature type="disulfide bond" evidence="3">
    <location>
        <begin position="74"/>
        <end position="90"/>
    </location>
</feature>
<feature type="disulfide bond" evidence="3">
    <location>
        <begin position="199"/>
        <end position="215"/>
    </location>
</feature>
<feature type="disulfide bond" evidence="3">
    <location>
        <begin position="226"/>
        <end position="250"/>
    </location>
</feature>
<feature type="sequence conflict" description="In Ref. 1; CAA80517." evidence="5" ref="1">
    <original>K</original>
    <variation>Q</variation>
    <location>
        <position position="42"/>
    </location>
</feature>
<feature type="sequence conflict" description="In Ref. 1; CAA80517." evidence="5" ref="1">
    <original>S</original>
    <variation>T</variation>
    <location>
        <position position="142"/>
    </location>
</feature>
<feature type="sequence conflict" description="In Ref. 1; CAA80517." evidence="5" ref="1">
    <original>D</original>
    <variation>E</variation>
    <location>
        <position position="157"/>
    </location>
</feature>
<feature type="sequence conflict" description="In Ref. 1; CAA80517." evidence="5" ref="1">
    <original>I</original>
    <variation>T</variation>
    <location>
        <position position="169"/>
    </location>
</feature>
<feature type="sequence conflict" description="In Ref. 1; CAA80517." evidence="5" ref="1">
    <original>V</original>
    <variation>I</variation>
    <location>
        <position position="191"/>
    </location>
</feature>
<feature type="sequence conflict" description="In Ref. 1; CAA80517." evidence="5" ref="1">
    <original>D</original>
    <variation>N</variation>
    <location>
        <position position="267"/>
    </location>
</feature>
<evidence type="ECO:0000250" key="1"/>
<evidence type="ECO:0000255" key="2"/>
<evidence type="ECO:0000255" key="3">
    <source>
        <dbReference type="PROSITE-ProRule" id="PRU00274"/>
    </source>
</evidence>
<evidence type="ECO:0000269" key="4">
    <source>
    </source>
</evidence>
<evidence type="ECO:0000305" key="5"/>
<dbReference type="EC" id="3.4.21.4"/>
<dbReference type="EMBL" id="Z22930">
    <property type="protein sequence ID" value="CAA80517.1"/>
    <property type="molecule type" value="Genomic_DNA"/>
</dbReference>
<dbReference type="EMBL" id="AAAB01008964">
    <property type="protein sequence ID" value="EAA12261.3"/>
    <property type="status" value="ALT_SEQ"/>
    <property type="molecule type" value="Genomic_DNA"/>
</dbReference>
<dbReference type="PIR" id="S40007">
    <property type="entry name" value="S40007"/>
</dbReference>
<dbReference type="RefSeq" id="XP_317171.2">
    <property type="nucleotide sequence ID" value="XM_317171.3"/>
</dbReference>
<dbReference type="SMR" id="P35037"/>
<dbReference type="FunCoup" id="P35037">
    <property type="interactions" value="55"/>
</dbReference>
<dbReference type="MEROPS" id="S01.130"/>
<dbReference type="PaxDb" id="7165-AGAP008294-PA"/>
<dbReference type="VEuPathDB" id="VectorBase:AGAMI1_002832"/>
<dbReference type="VEuPathDB" id="VectorBase:AGAP008294"/>
<dbReference type="eggNOG" id="KOG3627">
    <property type="taxonomic scope" value="Eukaryota"/>
</dbReference>
<dbReference type="HOGENOM" id="CLU_006842_7_0_1"/>
<dbReference type="InParanoid" id="P35037"/>
<dbReference type="Proteomes" id="UP000007062">
    <property type="component" value="Chromosome 3R"/>
</dbReference>
<dbReference type="GO" id="GO:0005576">
    <property type="term" value="C:extracellular region"/>
    <property type="evidence" value="ECO:0007669"/>
    <property type="project" value="UniProtKB-SubCell"/>
</dbReference>
<dbReference type="GO" id="GO:0004252">
    <property type="term" value="F:serine-type endopeptidase activity"/>
    <property type="evidence" value="ECO:0000318"/>
    <property type="project" value="GO_Central"/>
</dbReference>
<dbReference type="GO" id="GO:0007586">
    <property type="term" value="P:digestion"/>
    <property type="evidence" value="ECO:0007669"/>
    <property type="project" value="UniProtKB-KW"/>
</dbReference>
<dbReference type="GO" id="GO:0006508">
    <property type="term" value="P:proteolysis"/>
    <property type="evidence" value="ECO:0007669"/>
    <property type="project" value="UniProtKB-KW"/>
</dbReference>
<dbReference type="CDD" id="cd00190">
    <property type="entry name" value="Tryp_SPc"/>
    <property type="match status" value="1"/>
</dbReference>
<dbReference type="FunFam" id="2.40.10.10:FF:000077">
    <property type="entry name" value="Predicted protein"/>
    <property type="match status" value="1"/>
</dbReference>
<dbReference type="Gene3D" id="2.40.10.10">
    <property type="entry name" value="Trypsin-like serine proteases"/>
    <property type="match status" value="1"/>
</dbReference>
<dbReference type="InterPro" id="IPR050430">
    <property type="entry name" value="Peptidase_S1"/>
</dbReference>
<dbReference type="InterPro" id="IPR009003">
    <property type="entry name" value="Peptidase_S1_PA"/>
</dbReference>
<dbReference type="InterPro" id="IPR043504">
    <property type="entry name" value="Peptidase_S1_PA_chymotrypsin"/>
</dbReference>
<dbReference type="InterPro" id="IPR001314">
    <property type="entry name" value="Peptidase_S1A"/>
</dbReference>
<dbReference type="InterPro" id="IPR001254">
    <property type="entry name" value="Trypsin_dom"/>
</dbReference>
<dbReference type="InterPro" id="IPR018114">
    <property type="entry name" value="TRYPSIN_HIS"/>
</dbReference>
<dbReference type="InterPro" id="IPR033116">
    <property type="entry name" value="TRYPSIN_SER"/>
</dbReference>
<dbReference type="PANTHER" id="PTHR24276:SF97">
    <property type="entry name" value="GH13245P2-RELATED"/>
    <property type="match status" value="1"/>
</dbReference>
<dbReference type="PANTHER" id="PTHR24276">
    <property type="entry name" value="POLYSERASE-RELATED"/>
    <property type="match status" value="1"/>
</dbReference>
<dbReference type="Pfam" id="PF00089">
    <property type="entry name" value="Trypsin"/>
    <property type="match status" value="1"/>
</dbReference>
<dbReference type="PRINTS" id="PR00722">
    <property type="entry name" value="CHYMOTRYPSIN"/>
</dbReference>
<dbReference type="SMART" id="SM00020">
    <property type="entry name" value="Tryp_SPc"/>
    <property type="match status" value="1"/>
</dbReference>
<dbReference type="SUPFAM" id="SSF50494">
    <property type="entry name" value="Trypsin-like serine proteases"/>
    <property type="match status" value="1"/>
</dbReference>
<dbReference type="PROSITE" id="PS50240">
    <property type="entry name" value="TRYPSIN_DOM"/>
    <property type="match status" value="1"/>
</dbReference>
<dbReference type="PROSITE" id="PS00134">
    <property type="entry name" value="TRYPSIN_HIS"/>
    <property type="match status" value="1"/>
</dbReference>
<dbReference type="PROSITE" id="PS00135">
    <property type="entry name" value="TRYPSIN_SER"/>
    <property type="match status" value="1"/>
</dbReference>
<name>TRY3_ANOGA</name>
<keyword id="KW-0222">Digestion</keyword>
<keyword id="KW-1015">Disulfide bond</keyword>
<keyword id="KW-0378">Hydrolase</keyword>
<keyword id="KW-0645">Protease</keyword>
<keyword id="KW-1185">Reference proteome</keyword>
<keyword id="KW-0964">Secreted</keyword>
<keyword id="KW-0720">Serine protease</keyword>
<keyword id="KW-0732">Signal</keyword>
<keyword id="KW-0865">Zymogen</keyword>
<protein>
    <recommendedName>
        <fullName>Trypsin-3</fullName>
        <ecNumber>3.4.21.4</ecNumber>
    </recommendedName>
</protein>
<accession>P35037</accession>
<accession>Q7PNF7</accession>
<organism>
    <name type="scientific">Anopheles gambiae</name>
    <name type="common">African malaria mosquito</name>
    <dbReference type="NCBI Taxonomy" id="7165"/>
    <lineage>
        <taxon>Eukaryota</taxon>
        <taxon>Metazoa</taxon>
        <taxon>Ecdysozoa</taxon>
        <taxon>Arthropoda</taxon>
        <taxon>Hexapoda</taxon>
        <taxon>Insecta</taxon>
        <taxon>Pterygota</taxon>
        <taxon>Neoptera</taxon>
        <taxon>Endopterygota</taxon>
        <taxon>Diptera</taxon>
        <taxon>Nematocera</taxon>
        <taxon>Culicoidea</taxon>
        <taxon>Culicidae</taxon>
        <taxon>Anophelinae</taxon>
        <taxon>Anopheles</taxon>
    </lineage>
</organism>
<gene>
    <name type="primary">TRYP3</name>
    <name type="ORF">AGAP008294</name>
</gene>